<name>RNFA_SODGM</name>
<proteinExistence type="inferred from homology"/>
<keyword id="KW-0997">Cell inner membrane</keyword>
<keyword id="KW-1003">Cell membrane</keyword>
<keyword id="KW-0249">Electron transport</keyword>
<keyword id="KW-0472">Membrane</keyword>
<keyword id="KW-1278">Translocase</keyword>
<keyword id="KW-0812">Transmembrane</keyword>
<keyword id="KW-1133">Transmembrane helix</keyword>
<keyword id="KW-0813">Transport</keyword>
<organism>
    <name type="scientific">Sodalis glossinidius (strain morsitans)</name>
    <dbReference type="NCBI Taxonomy" id="343509"/>
    <lineage>
        <taxon>Bacteria</taxon>
        <taxon>Pseudomonadati</taxon>
        <taxon>Pseudomonadota</taxon>
        <taxon>Gammaproteobacteria</taxon>
        <taxon>Enterobacterales</taxon>
        <taxon>Bruguierivoracaceae</taxon>
        <taxon>Sodalis</taxon>
    </lineage>
</organism>
<protein>
    <recommendedName>
        <fullName evidence="1">Ion-translocating oxidoreductase complex subunit A</fullName>
        <ecNumber evidence="1">7.-.-.-</ecNumber>
    </recommendedName>
    <alternativeName>
        <fullName evidence="1">Rnf electron transport complex subunit A</fullName>
    </alternativeName>
</protein>
<accession>Q2NSZ5</accession>
<comment type="function">
    <text evidence="1">Part of a membrane-bound complex that couples electron transfer with translocation of ions across the membrane.</text>
</comment>
<comment type="subunit">
    <text evidence="1">The complex is composed of six subunits: RnfA, RnfB, RnfC, RnfD, RnfE and RnfG.</text>
</comment>
<comment type="subcellular location">
    <subcellularLocation>
        <location evidence="1">Cell inner membrane</location>
        <topology evidence="1">Multi-pass membrane protein</topology>
    </subcellularLocation>
</comment>
<comment type="similarity">
    <text evidence="1">Belongs to the NqrDE/RnfAE family.</text>
</comment>
<evidence type="ECO:0000255" key="1">
    <source>
        <dbReference type="HAMAP-Rule" id="MF_00459"/>
    </source>
</evidence>
<sequence>MNGYLMLFIGTVLVNNFVLVKFLGLCPFMGVSKKVETALGMGMATTFVMTLASICAWLINDFILLPLNIPYLRTLAFIFIIAVVVQFTELVVRKTSPALYRLLGIFLPLITTNCAVLGVALLNVNENHNFLQSALYGFSAAVGFSLVMVLFAAIRERLAVADVPAPFKGSSIALITAGLMSLAFMGFTGLVKV</sequence>
<dbReference type="EC" id="7.-.-.-" evidence="1"/>
<dbReference type="EMBL" id="AP008232">
    <property type="protein sequence ID" value="BAE74730.1"/>
    <property type="molecule type" value="Genomic_DNA"/>
</dbReference>
<dbReference type="SMR" id="Q2NSZ5"/>
<dbReference type="STRING" id="343509.SG1455"/>
<dbReference type="KEGG" id="sgl:SG1455"/>
<dbReference type="eggNOG" id="COG4657">
    <property type="taxonomic scope" value="Bacteria"/>
</dbReference>
<dbReference type="HOGENOM" id="CLU_095255_1_0_6"/>
<dbReference type="OrthoDB" id="9803631at2"/>
<dbReference type="BioCyc" id="SGLO343509:SGP1_RS12875-MONOMER"/>
<dbReference type="Proteomes" id="UP000001932">
    <property type="component" value="Chromosome"/>
</dbReference>
<dbReference type="GO" id="GO:0005886">
    <property type="term" value="C:plasma membrane"/>
    <property type="evidence" value="ECO:0007669"/>
    <property type="project" value="UniProtKB-SubCell"/>
</dbReference>
<dbReference type="GO" id="GO:0022900">
    <property type="term" value="P:electron transport chain"/>
    <property type="evidence" value="ECO:0007669"/>
    <property type="project" value="UniProtKB-UniRule"/>
</dbReference>
<dbReference type="HAMAP" id="MF_00459">
    <property type="entry name" value="RsxA_RnfA"/>
    <property type="match status" value="1"/>
</dbReference>
<dbReference type="InterPro" id="IPR011293">
    <property type="entry name" value="Ion_transpt_RnfA/RsxA"/>
</dbReference>
<dbReference type="InterPro" id="IPR003667">
    <property type="entry name" value="NqrDE/RnfAE"/>
</dbReference>
<dbReference type="InterPro" id="IPR050133">
    <property type="entry name" value="NqrDE/RnfAE_oxidrdctase"/>
</dbReference>
<dbReference type="NCBIfam" id="NF003481">
    <property type="entry name" value="PRK05151.1"/>
    <property type="match status" value="1"/>
</dbReference>
<dbReference type="NCBIfam" id="TIGR01943">
    <property type="entry name" value="rnfA"/>
    <property type="match status" value="1"/>
</dbReference>
<dbReference type="PANTHER" id="PTHR30335">
    <property type="entry name" value="INTEGRAL MEMBRANE PROTEIN OF SOXR-REDUCING COMPLEX"/>
    <property type="match status" value="1"/>
</dbReference>
<dbReference type="PANTHER" id="PTHR30335:SF0">
    <property type="entry name" value="ION-TRANSLOCATING OXIDOREDUCTASE COMPLEX SUBUNIT A"/>
    <property type="match status" value="1"/>
</dbReference>
<dbReference type="Pfam" id="PF02508">
    <property type="entry name" value="Rnf-Nqr"/>
    <property type="match status" value="1"/>
</dbReference>
<dbReference type="PIRSF" id="PIRSF006102">
    <property type="entry name" value="NQR_DE"/>
    <property type="match status" value="1"/>
</dbReference>
<reference key="1">
    <citation type="journal article" date="2006" name="Genome Res.">
        <title>Massive genome erosion and functional adaptations provide insights into the symbiotic lifestyle of Sodalis glossinidius in the tsetse host.</title>
        <authorList>
            <person name="Toh H."/>
            <person name="Weiss B.L."/>
            <person name="Perkin S.A.H."/>
            <person name="Yamashita A."/>
            <person name="Oshima K."/>
            <person name="Hattori M."/>
            <person name="Aksoy S."/>
        </authorList>
    </citation>
    <scope>NUCLEOTIDE SEQUENCE [LARGE SCALE GENOMIC DNA]</scope>
    <source>
        <strain>morsitans</strain>
    </source>
</reference>
<feature type="chain" id="PRO_1000013561" description="Ion-translocating oxidoreductase complex subunit A">
    <location>
        <begin position="1"/>
        <end position="193"/>
    </location>
</feature>
<feature type="transmembrane region" description="Helical" evidence="1">
    <location>
        <begin position="5"/>
        <end position="25"/>
    </location>
</feature>
<feature type="transmembrane region" description="Helical" evidence="1">
    <location>
        <begin position="39"/>
        <end position="59"/>
    </location>
</feature>
<feature type="transmembrane region" description="Helical" evidence="1">
    <location>
        <begin position="62"/>
        <end position="82"/>
    </location>
</feature>
<feature type="transmembrane region" description="Helical" evidence="1">
    <location>
        <begin position="102"/>
        <end position="122"/>
    </location>
</feature>
<feature type="transmembrane region" description="Helical" evidence="1">
    <location>
        <begin position="134"/>
        <end position="154"/>
    </location>
</feature>
<feature type="transmembrane region" description="Helical" evidence="1">
    <location>
        <begin position="171"/>
        <end position="191"/>
    </location>
</feature>
<gene>
    <name evidence="1" type="primary">rnfA</name>
    <name type="ordered locus">SG1455</name>
</gene>